<reference key="1">
    <citation type="submission" date="2008-04" db="EMBL/GenBank/DDBJ databases">
        <title>Complete sequence of chromosome of Natranaerobius thermophilus JW/NM-WN-LF.</title>
        <authorList>
            <consortium name="US DOE Joint Genome Institute"/>
            <person name="Copeland A."/>
            <person name="Lucas S."/>
            <person name="Lapidus A."/>
            <person name="Glavina del Rio T."/>
            <person name="Dalin E."/>
            <person name="Tice H."/>
            <person name="Bruce D."/>
            <person name="Goodwin L."/>
            <person name="Pitluck S."/>
            <person name="Chertkov O."/>
            <person name="Brettin T."/>
            <person name="Detter J.C."/>
            <person name="Han C."/>
            <person name="Kuske C.R."/>
            <person name="Schmutz J."/>
            <person name="Larimer F."/>
            <person name="Land M."/>
            <person name="Hauser L."/>
            <person name="Kyrpides N."/>
            <person name="Lykidis A."/>
            <person name="Mesbah N.M."/>
            <person name="Wiegel J."/>
        </authorList>
    </citation>
    <scope>NUCLEOTIDE SEQUENCE [LARGE SCALE GENOMIC DNA]</scope>
    <source>
        <strain>ATCC BAA-1301 / DSM 18059 / JW/NM-WN-LF</strain>
    </source>
</reference>
<organism>
    <name type="scientific">Natranaerobius thermophilus (strain ATCC BAA-1301 / DSM 18059 / JW/NM-WN-LF)</name>
    <dbReference type="NCBI Taxonomy" id="457570"/>
    <lineage>
        <taxon>Bacteria</taxon>
        <taxon>Bacillati</taxon>
        <taxon>Bacillota</taxon>
        <taxon>Clostridia</taxon>
        <taxon>Natranaerobiales</taxon>
        <taxon>Natranaerobiaceae</taxon>
        <taxon>Natranaerobius</taxon>
    </lineage>
</organism>
<sequence>MSRIGKKPIEIPDSVDISINNNEVTVKGPKGELSQVVDQSIILEEEEGQLLVKRPTDSNHHKSLHGLSRSLIANMVEGVTNGFERHLEIVGVGYRAQMQGKNLVLNVGYSHPVTIEPPEGVEIEVPKNNQIIVKGTDKEVVGQVAARIRAVRKPEPYKGKGIKYAEEQIIRKVGKTGK</sequence>
<protein>
    <recommendedName>
        <fullName evidence="1">Large ribosomal subunit protein uL6</fullName>
    </recommendedName>
    <alternativeName>
        <fullName evidence="2">50S ribosomal protein L6</fullName>
    </alternativeName>
</protein>
<name>RL6_NATTJ</name>
<feature type="chain" id="PRO_1000144021" description="Large ribosomal subunit protein uL6">
    <location>
        <begin position="1"/>
        <end position="178"/>
    </location>
</feature>
<dbReference type="EMBL" id="CP001034">
    <property type="protein sequence ID" value="ACB83808.1"/>
    <property type="molecule type" value="Genomic_DNA"/>
</dbReference>
<dbReference type="RefSeq" id="WP_012446697.1">
    <property type="nucleotide sequence ID" value="NC_010718.1"/>
</dbReference>
<dbReference type="SMR" id="B2A4F4"/>
<dbReference type="FunCoup" id="B2A4F4">
    <property type="interactions" value="430"/>
</dbReference>
<dbReference type="STRING" id="457570.Nther_0209"/>
<dbReference type="KEGG" id="nth:Nther_0209"/>
<dbReference type="eggNOG" id="COG0097">
    <property type="taxonomic scope" value="Bacteria"/>
</dbReference>
<dbReference type="HOGENOM" id="CLU_065464_1_2_9"/>
<dbReference type="InParanoid" id="B2A4F4"/>
<dbReference type="OrthoDB" id="9805007at2"/>
<dbReference type="Proteomes" id="UP000001683">
    <property type="component" value="Chromosome"/>
</dbReference>
<dbReference type="GO" id="GO:0022625">
    <property type="term" value="C:cytosolic large ribosomal subunit"/>
    <property type="evidence" value="ECO:0007669"/>
    <property type="project" value="TreeGrafter"/>
</dbReference>
<dbReference type="GO" id="GO:0019843">
    <property type="term" value="F:rRNA binding"/>
    <property type="evidence" value="ECO:0007669"/>
    <property type="project" value="UniProtKB-UniRule"/>
</dbReference>
<dbReference type="GO" id="GO:0003735">
    <property type="term" value="F:structural constituent of ribosome"/>
    <property type="evidence" value="ECO:0007669"/>
    <property type="project" value="InterPro"/>
</dbReference>
<dbReference type="GO" id="GO:0002181">
    <property type="term" value="P:cytoplasmic translation"/>
    <property type="evidence" value="ECO:0007669"/>
    <property type="project" value="TreeGrafter"/>
</dbReference>
<dbReference type="FunFam" id="3.90.930.12:FF:000001">
    <property type="entry name" value="50S ribosomal protein L6"/>
    <property type="match status" value="1"/>
</dbReference>
<dbReference type="FunFam" id="3.90.930.12:FF:000002">
    <property type="entry name" value="50S ribosomal protein L6"/>
    <property type="match status" value="1"/>
</dbReference>
<dbReference type="Gene3D" id="3.90.930.12">
    <property type="entry name" value="Ribosomal protein L6, alpha-beta domain"/>
    <property type="match status" value="2"/>
</dbReference>
<dbReference type="HAMAP" id="MF_01365_B">
    <property type="entry name" value="Ribosomal_uL6_B"/>
    <property type="match status" value="1"/>
</dbReference>
<dbReference type="InterPro" id="IPR000702">
    <property type="entry name" value="Ribosomal_uL6-like"/>
</dbReference>
<dbReference type="InterPro" id="IPR036789">
    <property type="entry name" value="Ribosomal_uL6-like_a/b-dom_sf"/>
</dbReference>
<dbReference type="InterPro" id="IPR020040">
    <property type="entry name" value="Ribosomal_uL6_a/b-dom"/>
</dbReference>
<dbReference type="InterPro" id="IPR019906">
    <property type="entry name" value="Ribosomal_uL6_bac-type"/>
</dbReference>
<dbReference type="InterPro" id="IPR002358">
    <property type="entry name" value="Ribosomal_uL6_CS"/>
</dbReference>
<dbReference type="NCBIfam" id="TIGR03654">
    <property type="entry name" value="L6_bact"/>
    <property type="match status" value="1"/>
</dbReference>
<dbReference type="PANTHER" id="PTHR11655">
    <property type="entry name" value="60S/50S RIBOSOMAL PROTEIN L6/L9"/>
    <property type="match status" value="1"/>
</dbReference>
<dbReference type="PANTHER" id="PTHR11655:SF14">
    <property type="entry name" value="LARGE RIBOSOMAL SUBUNIT PROTEIN UL6M"/>
    <property type="match status" value="1"/>
</dbReference>
<dbReference type="Pfam" id="PF00347">
    <property type="entry name" value="Ribosomal_L6"/>
    <property type="match status" value="2"/>
</dbReference>
<dbReference type="PIRSF" id="PIRSF002162">
    <property type="entry name" value="Ribosomal_L6"/>
    <property type="match status" value="1"/>
</dbReference>
<dbReference type="PRINTS" id="PR00059">
    <property type="entry name" value="RIBOSOMALL6"/>
</dbReference>
<dbReference type="SUPFAM" id="SSF56053">
    <property type="entry name" value="Ribosomal protein L6"/>
    <property type="match status" value="2"/>
</dbReference>
<dbReference type="PROSITE" id="PS00525">
    <property type="entry name" value="RIBOSOMAL_L6_1"/>
    <property type="match status" value="1"/>
</dbReference>
<keyword id="KW-1185">Reference proteome</keyword>
<keyword id="KW-0687">Ribonucleoprotein</keyword>
<keyword id="KW-0689">Ribosomal protein</keyword>
<keyword id="KW-0694">RNA-binding</keyword>
<keyword id="KW-0699">rRNA-binding</keyword>
<gene>
    <name evidence="1" type="primary">rplF</name>
    <name type="ordered locus">Nther_0209</name>
</gene>
<accession>B2A4F4</accession>
<proteinExistence type="inferred from homology"/>
<evidence type="ECO:0000255" key="1">
    <source>
        <dbReference type="HAMAP-Rule" id="MF_01365"/>
    </source>
</evidence>
<evidence type="ECO:0000305" key="2"/>
<comment type="function">
    <text evidence="1">This protein binds to the 23S rRNA, and is important in its secondary structure. It is located near the subunit interface in the base of the L7/L12 stalk, and near the tRNA binding site of the peptidyltransferase center.</text>
</comment>
<comment type="subunit">
    <text evidence="1">Part of the 50S ribosomal subunit.</text>
</comment>
<comment type="similarity">
    <text evidence="1">Belongs to the universal ribosomal protein uL6 family.</text>
</comment>